<accession>Q4ZPE4</accession>
<reference key="1">
    <citation type="journal article" date="2005" name="Proc. Natl. Acad. Sci. U.S.A.">
        <title>Comparison of the complete genome sequences of Pseudomonas syringae pv. syringae B728a and pv. tomato DC3000.</title>
        <authorList>
            <person name="Feil H."/>
            <person name="Feil W.S."/>
            <person name="Chain P."/>
            <person name="Larimer F."/>
            <person name="Dibartolo G."/>
            <person name="Copeland A."/>
            <person name="Lykidis A."/>
            <person name="Trong S."/>
            <person name="Nolan M."/>
            <person name="Goltsman E."/>
            <person name="Thiel J."/>
            <person name="Malfatti S."/>
            <person name="Loper J.E."/>
            <person name="Lapidus A."/>
            <person name="Detter J.C."/>
            <person name="Land M."/>
            <person name="Richardson P.M."/>
            <person name="Kyrpides N.C."/>
            <person name="Ivanova N."/>
            <person name="Lindow S.E."/>
        </authorList>
    </citation>
    <scope>NUCLEOTIDE SEQUENCE [LARGE SCALE GENOMIC DNA]</scope>
    <source>
        <strain>B728a</strain>
    </source>
</reference>
<dbReference type="EC" id="2.6.99.2" evidence="1"/>
<dbReference type="EMBL" id="CP000075">
    <property type="protein sequence ID" value="AAY38978.1"/>
    <property type="molecule type" value="Genomic_DNA"/>
</dbReference>
<dbReference type="RefSeq" id="WP_011268754.1">
    <property type="nucleotide sequence ID" value="NC_007005.1"/>
</dbReference>
<dbReference type="RefSeq" id="YP_237016.1">
    <property type="nucleotide sequence ID" value="NC_007005.1"/>
</dbReference>
<dbReference type="SMR" id="Q4ZPE4"/>
<dbReference type="STRING" id="205918.Psyr_3948"/>
<dbReference type="KEGG" id="psb:Psyr_3948"/>
<dbReference type="PATRIC" id="fig|205918.7.peg.4065"/>
<dbReference type="eggNOG" id="COG0854">
    <property type="taxonomic scope" value="Bacteria"/>
</dbReference>
<dbReference type="HOGENOM" id="CLU_074563_0_0_6"/>
<dbReference type="OrthoDB" id="9806590at2"/>
<dbReference type="UniPathway" id="UPA00244">
    <property type="reaction ID" value="UER00313"/>
</dbReference>
<dbReference type="Proteomes" id="UP000000426">
    <property type="component" value="Chromosome"/>
</dbReference>
<dbReference type="GO" id="GO:0005829">
    <property type="term" value="C:cytosol"/>
    <property type="evidence" value="ECO:0007669"/>
    <property type="project" value="TreeGrafter"/>
</dbReference>
<dbReference type="GO" id="GO:0033856">
    <property type="term" value="F:pyridoxine 5'-phosphate synthase activity"/>
    <property type="evidence" value="ECO:0007669"/>
    <property type="project" value="UniProtKB-EC"/>
</dbReference>
<dbReference type="GO" id="GO:0008615">
    <property type="term" value="P:pyridoxine biosynthetic process"/>
    <property type="evidence" value="ECO:0007669"/>
    <property type="project" value="UniProtKB-UniRule"/>
</dbReference>
<dbReference type="CDD" id="cd00003">
    <property type="entry name" value="PNPsynthase"/>
    <property type="match status" value="1"/>
</dbReference>
<dbReference type="FunFam" id="3.20.20.70:FF:000042">
    <property type="entry name" value="Pyridoxine 5'-phosphate synthase"/>
    <property type="match status" value="1"/>
</dbReference>
<dbReference type="Gene3D" id="3.20.20.70">
    <property type="entry name" value="Aldolase class I"/>
    <property type="match status" value="1"/>
</dbReference>
<dbReference type="HAMAP" id="MF_00279">
    <property type="entry name" value="PdxJ"/>
    <property type="match status" value="1"/>
</dbReference>
<dbReference type="InterPro" id="IPR013785">
    <property type="entry name" value="Aldolase_TIM"/>
</dbReference>
<dbReference type="InterPro" id="IPR004569">
    <property type="entry name" value="PyrdxlP_synth_PdxJ"/>
</dbReference>
<dbReference type="InterPro" id="IPR036130">
    <property type="entry name" value="Pyridoxine-5'_phos_synth"/>
</dbReference>
<dbReference type="NCBIfam" id="TIGR00559">
    <property type="entry name" value="pdxJ"/>
    <property type="match status" value="1"/>
</dbReference>
<dbReference type="NCBIfam" id="NF003623">
    <property type="entry name" value="PRK05265.1-1"/>
    <property type="match status" value="1"/>
</dbReference>
<dbReference type="NCBIfam" id="NF003625">
    <property type="entry name" value="PRK05265.1-3"/>
    <property type="match status" value="1"/>
</dbReference>
<dbReference type="NCBIfam" id="NF003627">
    <property type="entry name" value="PRK05265.1-5"/>
    <property type="match status" value="1"/>
</dbReference>
<dbReference type="PANTHER" id="PTHR30456">
    <property type="entry name" value="PYRIDOXINE 5'-PHOSPHATE SYNTHASE"/>
    <property type="match status" value="1"/>
</dbReference>
<dbReference type="PANTHER" id="PTHR30456:SF0">
    <property type="entry name" value="PYRIDOXINE 5'-PHOSPHATE SYNTHASE"/>
    <property type="match status" value="1"/>
</dbReference>
<dbReference type="Pfam" id="PF03740">
    <property type="entry name" value="PdxJ"/>
    <property type="match status" value="1"/>
</dbReference>
<dbReference type="SUPFAM" id="SSF63892">
    <property type="entry name" value="Pyridoxine 5'-phosphate synthase"/>
    <property type="match status" value="1"/>
</dbReference>
<gene>
    <name evidence="1" type="primary">pdxJ</name>
    <name type="ordered locus">Psyr_3948</name>
</gene>
<proteinExistence type="inferred from homology"/>
<comment type="function">
    <text evidence="1">Catalyzes the complicated ring closure reaction between the two acyclic compounds 1-deoxy-D-xylulose-5-phosphate (DXP) and 3-amino-2-oxopropyl phosphate (1-amino-acetone-3-phosphate or AAP) to form pyridoxine 5'-phosphate (PNP) and inorganic phosphate.</text>
</comment>
<comment type="catalytic activity">
    <reaction evidence="1">
        <text>3-amino-2-oxopropyl phosphate + 1-deoxy-D-xylulose 5-phosphate = pyridoxine 5'-phosphate + phosphate + 2 H2O + H(+)</text>
        <dbReference type="Rhea" id="RHEA:15265"/>
        <dbReference type="ChEBI" id="CHEBI:15377"/>
        <dbReference type="ChEBI" id="CHEBI:15378"/>
        <dbReference type="ChEBI" id="CHEBI:43474"/>
        <dbReference type="ChEBI" id="CHEBI:57279"/>
        <dbReference type="ChEBI" id="CHEBI:57792"/>
        <dbReference type="ChEBI" id="CHEBI:58589"/>
        <dbReference type="EC" id="2.6.99.2"/>
    </reaction>
</comment>
<comment type="pathway">
    <text evidence="1">Cofactor biosynthesis; pyridoxine 5'-phosphate biosynthesis; pyridoxine 5'-phosphate from D-erythrose 4-phosphate: step 5/5.</text>
</comment>
<comment type="subunit">
    <text evidence="1">Homooctamer; tetramer of dimers.</text>
</comment>
<comment type="subcellular location">
    <subcellularLocation>
        <location evidence="1">Cytoplasm</location>
    </subcellularLocation>
</comment>
<comment type="similarity">
    <text evidence="1">Belongs to the PNP synthase family.</text>
</comment>
<name>PDXJ_PSEU2</name>
<feature type="chain" id="PRO_0000231837" description="Pyridoxine 5'-phosphate synthase">
    <location>
        <begin position="1"/>
        <end position="246"/>
    </location>
</feature>
<feature type="active site" description="Proton acceptor" evidence="1">
    <location>
        <position position="48"/>
    </location>
</feature>
<feature type="active site" description="Proton acceptor" evidence="1">
    <location>
        <position position="75"/>
    </location>
</feature>
<feature type="active site" description="Proton donor" evidence="1">
    <location>
        <position position="196"/>
    </location>
</feature>
<feature type="binding site" evidence="1">
    <location>
        <position position="12"/>
    </location>
    <ligand>
        <name>3-amino-2-oxopropyl phosphate</name>
        <dbReference type="ChEBI" id="CHEBI:57279"/>
    </ligand>
</feature>
<feature type="binding site" evidence="1">
    <location>
        <begin position="14"/>
        <end position="15"/>
    </location>
    <ligand>
        <name>1-deoxy-D-xylulose 5-phosphate</name>
        <dbReference type="ChEBI" id="CHEBI:57792"/>
    </ligand>
</feature>
<feature type="binding site" evidence="1">
    <location>
        <position position="23"/>
    </location>
    <ligand>
        <name>3-amino-2-oxopropyl phosphate</name>
        <dbReference type="ChEBI" id="CHEBI:57279"/>
    </ligand>
</feature>
<feature type="binding site" evidence="1">
    <location>
        <position position="50"/>
    </location>
    <ligand>
        <name>1-deoxy-D-xylulose 5-phosphate</name>
        <dbReference type="ChEBI" id="CHEBI:57792"/>
    </ligand>
</feature>
<feature type="binding site" evidence="1">
    <location>
        <position position="55"/>
    </location>
    <ligand>
        <name>1-deoxy-D-xylulose 5-phosphate</name>
        <dbReference type="ChEBI" id="CHEBI:57792"/>
    </ligand>
</feature>
<feature type="binding site" evidence="1">
    <location>
        <position position="105"/>
    </location>
    <ligand>
        <name>1-deoxy-D-xylulose 5-phosphate</name>
        <dbReference type="ChEBI" id="CHEBI:57792"/>
    </ligand>
</feature>
<feature type="binding site" evidence="1">
    <location>
        <position position="197"/>
    </location>
    <ligand>
        <name>3-amino-2-oxopropyl phosphate</name>
        <dbReference type="ChEBI" id="CHEBI:57279"/>
    </ligand>
</feature>
<feature type="binding site" evidence="1">
    <location>
        <begin position="218"/>
        <end position="219"/>
    </location>
    <ligand>
        <name>3-amino-2-oxopropyl phosphate</name>
        <dbReference type="ChEBI" id="CHEBI:57279"/>
    </ligand>
</feature>
<feature type="site" description="Transition state stabilizer" evidence="1">
    <location>
        <position position="156"/>
    </location>
</feature>
<keyword id="KW-0963">Cytoplasm</keyword>
<keyword id="KW-0664">Pyridoxine biosynthesis</keyword>
<keyword id="KW-0808">Transferase</keyword>
<evidence type="ECO:0000255" key="1">
    <source>
        <dbReference type="HAMAP-Rule" id="MF_00279"/>
    </source>
</evidence>
<sequence>MTHSTRILLGVNIDHVATLRQARGTRYPDPVKAALDAEEAGADGITVHLREDRRHIQERDVLLLKDVLQTRMNFEMGVTEDMLAFAERIRPAHICLVPETRQELTTEGGLDVAGQEARIKAAVERLAKIGCEVSLFIDADERQIAASKRVGAPAIELHTGRYADAQTPTEVAEELQRVADGVAFGLAQGLVVNAGHGLHYHNVEAVAAIKGINELNIGHALVAHALFVGFKAAVAEMKALIVAAAR</sequence>
<protein>
    <recommendedName>
        <fullName evidence="1">Pyridoxine 5'-phosphate synthase</fullName>
        <shortName evidence="1">PNP synthase</shortName>
        <ecNumber evidence="1">2.6.99.2</ecNumber>
    </recommendedName>
</protein>
<organism>
    <name type="scientific">Pseudomonas syringae pv. syringae (strain B728a)</name>
    <dbReference type="NCBI Taxonomy" id="205918"/>
    <lineage>
        <taxon>Bacteria</taxon>
        <taxon>Pseudomonadati</taxon>
        <taxon>Pseudomonadota</taxon>
        <taxon>Gammaproteobacteria</taxon>
        <taxon>Pseudomonadales</taxon>
        <taxon>Pseudomonadaceae</taxon>
        <taxon>Pseudomonas</taxon>
        <taxon>Pseudomonas syringae</taxon>
    </lineage>
</organism>